<protein>
    <recommendedName>
        <fullName evidence="1">Flap endonuclease Xni</fullName>
        <shortName evidence="1">FEN</shortName>
        <ecNumber evidence="1">3.1.-.-</ecNumber>
    </recommendedName>
</protein>
<gene>
    <name evidence="1" type="primary">xni</name>
    <name evidence="1" type="synonym">ygdG</name>
    <name type="ordered locus">YPTB3014</name>
</gene>
<name>XNI_YERPS</name>
<feature type="chain" id="PRO_0000297897" description="Flap endonuclease Xni">
    <location>
        <begin position="1"/>
        <end position="251"/>
    </location>
</feature>
<feature type="domain" description="5'-3' exonuclease" evidence="1">
    <location>
        <begin position="160"/>
        <end position="250"/>
    </location>
</feature>
<feature type="region of interest" description="Interaction with DNA" evidence="1">
    <location>
        <begin position="184"/>
        <end position="189"/>
    </location>
</feature>
<feature type="binding site" evidence="1">
    <location>
        <position position="104"/>
    </location>
    <ligand>
        <name>Mg(2+)</name>
        <dbReference type="ChEBI" id="CHEBI:18420"/>
    </ligand>
</feature>
<feature type="binding site" evidence="1">
    <location>
        <position position="171"/>
    </location>
    <ligand>
        <name>K(+)</name>
        <dbReference type="ChEBI" id="CHEBI:29103"/>
    </ligand>
</feature>
<feature type="binding site" evidence="1">
    <location>
        <position position="172"/>
    </location>
    <ligand>
        <name>K(+)</name>
        <dbReference type="ChEBI" id="CHEBI:29103"/>
    </ligand>
</feature>
<feature type="binding site" evidence="1">
    <location>
        <position position="180"/>
    </location>
    <ligand>
        <name>K(+)</name>
        <dbReference type="ChEBI" id="CHEBI:29103"/>
    </ligand>
</feature>
<feature type="binding site" evidence="1">
    <location>
        <position position="182"/>
    </location>
    <ligand>
        <name>K(+)</name>
        <dbReference type="ChEBI" id="CHEBI:29103"/>
    </ligand>
</feature>
<feature type="binding site" evidence="1">
    <location>
        <position position="185"/>
    </location>
    <ligand>
        <name>K(+)</name>
        <dbReference type="ChEBI" id="CHEBI:29103"/>
    </ligand>
</feature>
<keyword id="KW-0238">DNA-binding</keyword>
<keyword id="KW-0255">Endonuclease</keyword>
<keyword id="KW-0378">Hydrolase</keyword>
<keyword id="KW-0460">Magnesium</keyword>
<keyword id="KW-0479">Metal-binding</keyword>
<keyword id="KW-0540">Nuclease</keyword>
<keyword id="KW-0630">Potassium</keyword>
<reference key="1">
    <citation type="journal article" date="2004" name="Proc. Natl. Acad. Sci. U.S.A.">
        <title>Insights into the evolution of Yersinia pestis through whole-genome comparison with Yersinia pseudotuberculosis.</title>
        <authorList>
            <person name="Chain P.S.G."/>
            <person name="Carniel E."/>
            <person name="Larimer F.W."/>
            <person name="Lamerdin J."/>
            <person name="Stoutland P.O."/>
            <person name="Regala W.M."/>
            <person name="Georgescu A.M."/>
            <person name="Vergez L.M."/>
            <person name="Land M.L."/>
            <person name="Motin V.L."/>
            <person name="Brubaker R.R."/>
            <person name="Fowler J."/>
            <person name="Hinnebusch J."/>
            <person name="Marceau M."/>
            <person name="Medigue C."/>
            <person name="Simonet M."/>
            <person name="Chenal-Francisque V."/>
            <person name="Souza B."/>
            <person name="Dacheux D."/>
            <person name="Elliott J.M."/>
            <person name="Derbise A."/>
            <person name="Hauser L.J."/>
            <person name="Garcia E."/>
        </authorList>
    </citation>
    <scope>NUCLEOTIDE SEQUENCE [LARGE SCALE GENOMIC DNA]</scope>
    <source>
        <strain>IP32953</strain>
    </source>
</reference>
<dbReference type="EC" id="3.1.-.-" evidence="1"/>
<dbReference type="EMBL" id="BX936398">
    <property type="protein sequence ID" value="CAH22252.1"/>
    <property type="molecule type" value="Genomic_DNA"/>
</dbReference>
<dbReference type="RefSeq" id="WP_011192868.1">
    <property type="nucleotide sequence ID" value="NC_006155.1"/>
</dbReference>
<dbReference type="SMR" id="Q667H8"/>
<dbReference type="GeneID" id="49784967"/>
<dbReference type="KEGG" id="ypo:BZ17_3606"/>
<dbReference type="KEGG" id="yps:YPTB3014"/>
<dbReference type="PATRIC" id="fig|273123.14.peg.3786"/>
<dbReference type="Proteomes" id="UP000001011">
    <property type="component" value="Chromosome"/>
</dbReference>
<dbReference type="GO" id="GO:0008409">
    <property type="term" value="F:5'-3' exonuclease activity"/>
    <property type="evidence" value="ECO:0007669"/>
    <property type="project" value="InterPro"/>
</dbReference>
<dbReference type="GO" id="GO:0017108">
    <property type="term" value="F:5'-flap endonuclease activity"/>
    <property type="evidence" value="ECO:0007669"/>
    <property type="project" value="UniProtKB-UniRule"/>
</dbReference>
<dbReference type="GO" id="GO:0003677">
    <property type="term" value="F:DNA binding"/>
    <property type="evidence" value="ECO:0007669"/>
    <property type="project" value="UniProtKB-UniRule"/>
</dbReference>
<dbReference type="GO" id="GO:0000287">
    <property type="term" value="F:magnesium ion binding"/>
    <property type="evidence" value="ECO:0007669"/>
    <property type="project" value="UniProtKB-UniRule"/>
</dbReference>
<dbReference type="GO" id="GO:0030955">
    <property type="term" value="F:potassium ion binding"/>
    <property type="evidence" value="ECO:0007669"/>
    <property type="project" value="UniProtKB-UniRule"/>
</dbReference>
<dbReference type="GO" id="GO:0033567">
    <property type="term" value="P:DNA replication, Okazaki fragment processing"/>
    <property type="evidence" value="ECO:0007669"/>
    <property type="project" value="UniProtKB-UniRule"/>
</dbReference>
<dbReference type="CDD" id="cd09898">
    <property type="entry name" value="H3TH_53EXO"/>
    <property type="match status" value="1"/>
</dbReference>
<dbReference type="CDD" id="cd09859">
    <property type="entry name" value="PIN_53EXO"/>
    <property type="match status" value="1"/>
</dbReference>
<dbReference type="FunFam" id="1.10.150.20:FF:000003">
    <property type="entry name" value="DNA polymerase I"/>
    <property type="match status" value="1"/>
</dbReference>
<dbReference type="FunFam" id="3.40.50.1010:FF:000011">
    <property type="entry name" value="Flap endonuclease Xni"/>
    <property type="match status" value="1"/>
</dbReference>
<dbReference type="Gene3D" id="1.10.150.20">
    <property type="entry name" value="5' to 3' exonuclease, C-terminal subdomain"/>
    <property type="match status" value="1"/>
</dbReference>
<dbReference type="Gene3D" id="3.40.50.1010">
    <property type="entry name" value="5'-nuclease"/>
    <property type="match status" value="1"/>
</dbReference>
<dbReference type="HAMAP" id="MF_01192">
    <property type="entry name" value="Xni"/>
    <property type="match status" value="1"/>
</dbReference>
<dbReference type="InterPro" id="IPR020046">
    <property type="entry name" value="5-3_exonucl_a-hlix_arch_N"/>
</dbReference>
<dbReference type="InterPro" id="IPR002421">
    <property type="entry name" value="5-3_exonuclease"/>
</dbReference>
<dbReference type="InterPro" id="IPR036279">
    <property type="entry name" value="5-3_exonuclease_C_sf"/>
</dbReference>
<dbReference type="InterPro" id="IPR020045">
    <property type="entry name" value="DNA_polI_H3TH"/>
</dbReference>
<dbReference type="InterPro" id="IPR038969">
    <property type="entry name" value="FEN"/>
</dbReference>
<dbReference type="InterPro" id="IPR008918">
    <property type="entry name" value="HhH2"/>
</dbReference>
<dbReference type="InterPro" id="IPR029060">
    <property type="entry name" value="PIN-like_dom_sf"/>
</dbReference>
<dbReference type="InterPro" id="IPR022895">
    <property type="entry name" value="Xni"/>
</dbReference>
<dbReference type="NCBIfam" id="NF007017">
    <property type="entry name" value="PRK09482.1"/>
    <property type="match status" value="1"/>
</dbReference>
<dbReference type="PANTHER" id="PTHR42646:SF2">
    <property type="entry name" value="5'-3' EXONUCLEASE FAMILY PROTEIN"/>
    <property type="match status" value="1"/>
</dbReference>
<dbReference type="PANTHER" id="PTHR42646">
    <property type="entry name" value="FLAP ENDONUCLEASE XNI"/>
    <property type="match status" value="1"/>
</dbReference>
<dbReference type="Pfam" id="PF01367">
    <property type="entry name" value="5_3_exonuc"/>
    <property type="match status" value="1"/>
</dbReference>
<dbReference type="Pfam" id="PF02739">
    <property type="entry name" value="5_3_exonuc_N"/>
    <property type="match status" value="1"/>
</dbReference>
<dbReference type="SMART" id="SM00475">
    <property type="entry name" value="53EXOc"/>
    <property type="match status" value="1"/>
</dbReference>
<dbReference type="SMART" id="SM00279">
    <property type="entry name" value="HhH2"/>
    <property type="match status" value="1"/>
</dbReference>
<dbReference type="SUPFAM" id="SSF47807">
    <property type="entry name" value="5' to 3' exonuclease, C-terminal subdomain"/>
    <property type="match status" value="1"/>
</dbReference>
<dbReference type="SUPFAM" id="SSF88723">
    <property type="entry name" value="PIN domain-like"/>
    <property type="match status" value="1"/>
</dbReference>
<evidence type="ECO:0000255" key="1">
    <source>
        <dbReference type="HAMAP-Rule" id="MF_01192"/>
    </source>
</evidence>
<sequence>MQIHLLIVDALNLIRRIHAVQGSPCVKACQHALQQLIQHSQPSHAVAVFDEDDRSDSWRHQCLPDYKAGRSPMPDNLQQEMPLIRQAFNELGVACWHSPGNEADDLAATLVVKVAGAGHQVTIVSTDKGYCQLLAPNVQIRDYFQKRWLDMPFVKQEFGVLPRQLPDYWGLAGISSSKIPGVAGVGAKTATLLLQQADTLEVLYQNLESIPEKWRKKLQQHQQMAFTCKQIATLKTDLLLSGNLQQLRLKK</sequence>
<proteinExistence type="inferred from homology"/>
<accession>Q667H8</accession>
<comment type="function">
    <text evidence="1">Has flap endonuclease activity. During DNA replication, flap endonucleases cleave the 5'-overhanging flap structure that is generated by displacement synthesis when DNA polymerase encounters the 5'-end of a downstream Okazaki fragment.</text>
</comment>
<comment type="cofactor">
    <cofactor evidence="1">
        <name>Mg(2+)</name>
        <dbReference type="ChEBI" id="CHEBI:18420"/>
    </cofactor>
    <text evidence="1">Binds 2 Mg(2+) per subunit. Only one magnesium ion has a direct interaction with the protein, the other interactions are indirect.</text>
</comment>
<comment type="cofactor">
    <cofactor evidence="1">
        <name>K(+)</name>
        <dbReference type="ChEBI" id="CHEBI:29103"/>
    </cofactor>
    <text evidence="1">Binds 1 K(+) per subunit. The potassium ion strongly increases the affinity for DNA.</text>
</comment>
<comment type="similarity">
    <text evidence="1">Belongs to the Xni family.</text>
</comment>
<organism>
    <name type="scientific">Yersinia pseudotuberculosis serotype I (strain IP32953)</name>
    <dbReference type="NCBI Taxonomy" id="273123"/>
    <lineage>
        <taxon>Bacteria</taxon>
        <taxon>Pseudomonadati</taxon>
        <taxon>Pseudomonadota</taxon>
        <taxon>Gammaproteobacteria</taxon>
        <taxon>Enterobacterales</taxon>
        <taxon>Yersiniaceae</taxon>
        <taxon>Yersinia</taxon>
    </lineage>
</organism>